<organism>
    <name type="scientific">Mus musculus</name>
    <name type="common">Mouse</name>
    <dbReference type="NCBI Taxonomy" id="10090"/>
    <lineage>
        <taxon>Eukaryota</taxon>
        <taxon>Metazoa</taxon>
        <taxon>Chordata</taxon>
        <taxon>Craniata</taxon>
        <taxon>Vertebrata</taxon>
        <taxon>Euteleostomi</taxon>
        <taxon>Mammalia</taxon>
        <taxon>Eutheria</taxon>
        <taxon>Euarchontoglires</taxon>
        <taxon>Glires</taxon>
        <taxon>Rodentia</taxon>
        <taxon>Myomorpha</taxon>
        <taxon>Muroidea</taxon>
        <taxon>Muridae</taxon>
        <taxon>Murinae</taxon>
        <taxon>Mus</taxon>
        <taxon>Mus</taxon>
    </lineage>
</organism>
<gene>
    <name evidence="9" type="primary">F2r</name>
    <name type="synonym">Cf2r</name>
    <name type="synonym">Par1</name>
</gene>
<accession>P30558</accession>
<accession>P97507</accession>
<accession>Q3TVP3</accession>
<name>PAR1_MOUSE</name>
<feature type="signal peptide" evidence="1">
    <location>
        <begin position="1"/>
        <end position="21"/>
    </location>
</feature>
<feature type="propeptide" id="PRO_0000012742" description="Removed for receptor activation" evidence="1">
    <location>
        <begin position="22"/>
        <end position="41"/>
    </location>
</feature>
<feature type="chain" id="PRO_0000012743" description="Proteinase-activated receptor 1">
    <location>
        <begin position="42"/>
        <end position="430"/>
    </location>
</feature>
<feature type="topological domain" description="Extracellular" evidence="4">
    <location>
        <begin position="42"/>
        <end position="107"/>
    </location>
</feature>
<feature type="transmembrane region" description="Helical; Name=1" evidence="4">
    <location>
        <begin position="108"/>
        <end position="133"/>
    </location>
</feature>
<feature type="topological domain" description="Cytoplasmic" evidence="4">
    <location>
        <begin position="134"/>
        <end position="142"/>
    </location>
</feature>
<feature type="transmembrane region" description="Helical; Name=2" evidence="4">
    <location>
        <begin position="143"/>
        <end position="162"/>
    </location>
</feature>
<feature type="topological domain" description="Extracellular" evidence="4">
    <location>
        <begin position="163"/>
        <end position="181"/>
    </location>
</feature>
<feature type="transmembrane region" description="Helical; Name=3" evidence="4">
    <location>
        <begin position="182"/>
        <end position="203"/>
    </location>
</feature>
<feature type="topological domain" description="Cytoplasmic" evidence="4">
    <location>
        <begin position="204"/>
        <end position="223"/>
    </location>
</feature>
<feature type="transmembrane region" description="Helical; Name=4" evidence="4">
    <location>
        <begin position="224"/>
        <end position="244"/>
    </location>
</feature>
<feature type="topological domain" description="Extracellular" evidence="4">
    <location>
        <begin position="245"/>
        <end position="273"/>
    </location>
</feature>
<feature type="transmembrane region" description="Helical; Name=5" evidence="4">
    <location>
        <begin position="274"/>
        <end position="293"/>
    </location>
</feature>
<feature type="topological domain" description="Cytoplasmic" evidence="4">
    <location>
        <begin position="294"/>
        <end position="316"/>
    </location>
</feature>
<feature type="transmembrane region" description="Helical; Name=6" evidence="4">
    <location>
        <begin position="317"/>
        <end position="339"/>
    </location>
</feature>
<feature type="topological domain" description="Extracellular" evidence="4">
    <location>
        <begin position="340"/>
        <end position="354"/>
    </location>
</feature>
<feature type="transmembrane region" description="Helical; Name=7" evidence="4">
    <location>
        <begin position="355"/>
        <end position="379"/>
    </location>
</feature>
<feature type="topological domain" description="Cytoplasmic" evidence="4">
    <location>
        <begin position="380"/>
        <end position="430"/>
    </location>
</feature>
<feature type="site" description="Cleavage; by thrombin and CTSG" evidence="2">
    <location>
        <begin position="41"/>
        <end position="42"/>
    </location>
</feature>
<feature type="modified residue" description="Phosphoserine" evidence="2">
    <location>
        <position position="423"/>
    </location>
</feature>
<feature type="glycosylation site" description="N-linked (GlcNAc...) asparagine" evidence="6">
    <location>
        <position position="67"/>
    </location>
</feature>
<feature type="glycosylation site" description="N-linked (GlcNAc...) asparagine" evidence="4">
    <location>
        <position position="80"/>
    </location>
</feature>
<feature type="glycosylation site" description="N-linked (GlcNAc...) asparagine" evidence="4">
    <location>
        <position position="255"/>
    </location>
</feature>
<feature type="disulfide bond" evidence="5">
    <location>
        <begin position="180"/>
        <end position="259"/>
    </location>
</feature>
<feature type="sequence conflict" description="In Ref. 1; AAA40438." evidence="8" ref="1">
    <original>F</original>
    <variation>S</variation>
    <location>
        <position position="162"/>
    </location>
</feature>
<feature type="sequence conflict" description="In Ref. 1; AAA40438." evidence="8" ref="1">
    <original>G</original>
    <variation>Y</variation>
    <location>
        <position position="189"/>
    </location>
</feature>
<feature type="sequence conflict" description="In Ref. 1; AAA40438." evidence="8" ref="1">
    <original>R</original>
    <variation>G</variation>
    <location>
        <position position="223"/>
    </location>
</feature>
<feature type="sequence conflict" description="In Ref. 1; AAA40438." evidence="8" ref="1">
    <original>V</original>
    <variation>L</variation>
    <location>
        <position position="262"/>
    </location>
</feature>
<feature type="sequence conflict" description="In Ref. 1; AAA40438." evidence="8" ref="1">
    <original>S</original>
    <variation>T</variation>
    <location>
        <position position="365"/>
    </location>
</feature>
<proteinExistence type="evidence at protein level"/>
<evidence type="ECO:0000250" key="1"/>
<evidence type="ECO:0000250" key="2">
    <source>
        <dbReference type="UniProtKB" id="P25116"/>
    </source>
</evidence>
<evidence type="ECO:0000250" key="3">
    <source>
        <dbReference type="UniProtKB" id="P26824"/>
    </source>
</evidence>
<evidence type="ECO:0000255" key="4"/>
<evidence type="ECO:0000255" key="5">
    <source>
        <dbReference type="PROSITE-ProRule" id="PRU00521"/>
    </source>
</evidence>
<evidence type="ECO:0000269" key="6">
    <source>
    </source>
</evidence>
<evidence type="ECO:0000269" key="7">
    <source>
    </source>
</evidence>
<evidence type="ECO:0000305" key="8"/>
<evidence type="ECO:0000312" key="9">
    <source>
        <dbReference type="MGI" id="MGI:101802"/>
    </source>
</evidence>
<protein>
    <recommendedName>
        <fullName evidence="8">Proteinase-activated receptor 1</fullName>
        <shortName>PAR-1</shortName>
    </recommendedName>
    <alternativeName>
        <fullName>Thrombin receptor</fullName>
    </alternativeName>
</protein>
<sequence>MGPRRLLIVALGLSLCGPLLSSRVPMSQPESERTDATVNPRSFFLRNPSENTFELVPLGDEEEEEKNESVLLEGRAVYLNISLPPHTPPPPFISEDASGYLTSPWLTLFMPSVYTIVFIVSLPLNVLAIAVFVLRMKVKKPAVVYMLHLAMADVLFVSVLPFKISYYFSGTDWQFGSGMCRFATAAFYGNMYASIMLMTVISIDRFLAVVYPIQSLSWRTLGRANFTCVVIWVMAIMGVVPLLLKEQTTRVPGLNITTCHDVLSENLMQGFYSYYFSAFSAIFFLVPLIVSTVCYTSIIRCLSSSAVANRSKKSRALFLSAAVFCIFIVCFGPTNVLLIVHYLFLSDSPGTEAAYFAYLLCVCVSSVSCCIDPLIYYYASSECQRHLYSILCCKESSDPNSCNSTGQLMPSKMDTCSSHLNNSIYKKLLA</sequence>
<comment type="function">
    <text evidence="2 3 7">High affinity receptor that binds the activated thrombin, leading to calcium release from intracellular stores. The thrombin-activated receptor signaling pathway is mediated through PTX-insensitive G proteins, activation of phospholipase C resulting in the production of 1D-myo-inositol 1,4,5-trisphosphate (InsP3) which binds to InsP3 receptors causing calcium release from the stores (By similarity). In astrocytes, the calcium released into the cytosol allows the Ca(2+)-dependent release of L-glutamate into the synaptic cleft through BEST1, that targets the neuronal postsynaptic GRIN2A/NMDAR receptor resulting in the synaptic plasticity regulation (PubMed:25645137). May play a role in platelets activation and in vascular development (By similarity). Mediates up-regulation of pro-inflammatory cytokines, such as MCP-1/CCL2 and IL6, triggered by coagulation factor Xa (F10) in cardiac fibroblasts and umbilical vein endothelial cells (By similarity).</text>
</comment>
<comment type="subcellular location">
    <subcellularLocation>
        <location evidence="3">Cell membrane</location>
        <topology evidence="3">Multi-pass membrane protein</topology>
    </subcellularLocation>
</comment>
<comment type="domain">
    <text evidence="1">The cleaved signal peptide may not be degraded and may function as an intracellular angiogenesis inhibitor peptide known as parstatin.</text>
</comment>
<comment type="PTM">
    <text evidence="2">Proteolytic cleavage by thrombin generates a new N-terminus that functions as a tethered ligand. Also proteolytically cleaved by cathepsin CTSG.</text>
</comment>
<comment type="PTM">
    <text evidence="1">Phosphorylated in the C-terminal tail; probably mediating desensitization prior to the uncoupling and internalization of the receptor.</text>
</comment>
<comment type="similarity">
    <text evidence="5">Belongs to the G-protein coupled receptor 1 family.</text>
</comment>
<keyword id="KW-0094">Blood coagulation</keyword>
<keyword id="KW-1003">Cell membrane</keyword>
<keyword id="KW-1015">Disulfide bond</keyword>
<keyword id="KW-0297">G-protein coupled receptor</keyword>
<keyword id="KW-0325">Glycoprotein</keyword>
<keyword id="KW-0356">Hemostasis</keyword>
<keyword id="KW-0472">Membrane</keyword>
<keyword id="KW-0597">Phosphoprotein</keyword>
<keyword id="KW-0675">Receptor</keyword>
<keyword id="KW-1185">Reference proteome</keyword>
<keyword id="KW-0732">Signal</keyword>
<keyword id="KW-0807">Transducer</keyword>
<keyword id="KW-0812">Transmembrane</keyword>
<keyword id="KW-1133">Transmembrane helix</keyword>
<dbReference type="EMBL" id="L03529">
    <property type="protein sequence ID" value="AAA40438.1"/>
    <property type="molecule type" value="mRNA"/>
</dbReference>
<dbReference type="EMBL" id="U36757">
    <property type="protein sequence ID" value="AAB38308.1"/>
    <property type="molecule type" value="Genomic_DNA"/>
</dbReference>
<dbReference type="EMBL" id="U36756">
    <property type="protein sequence ID" value="AAB38308.1"/>
    <property type="status" value="JOINED"/>
    <property type="molecule type" value="Genomic_DNA"/>
</dbReference>
<dbReference type="EMBL" id="AK085990">
    <property type="protein sequence ID" value="BAC39587.1"/>
    <property type="molecule type" value="mRNA"/>
</dbReference>
<dbReference type="EMBL" id="AK159282">
    <property type="protein sequence ID" value="BAE34960.1"/>
    <property type="molecule type" value="mRNA"/>
</dbReference>
<dbReference type="EMBL" id="AK160032">
    <property type="protein sequence ID" value="BAE35575.1"/>
    <property type="molecule type" value="mRNA"/>
</dbReference>
<dbReference type="EMBL" id="BC031516">
    <property type="protein sequence ID" value="AAH31516.1"/>
    <property type="molecule type" value="mRNA"/>
</dbReference>
<dbReference type="EMBL" id="AH003565">
    <property type="protein sequence ID" value="AAB00198.1"/>
    <property type="molecule type" value="Genomic_DNA"/>
</dbReference>
<dbReference type="CCDS" id="CCDS26701.1"/>
<dbReference type="RefSeq" id="NP_034299.2">
    <property type="nucleotide sequence ID" value="NM_010169.3"/>
</dbReference>
<dbReference type="SMR" id="P30558"/>
<dbReference type="FunCoup" id="P30558">
    <property type="interactions" value="1289"/>
</dbReference>
<dbReference type="IntAct" id="P30558">
    <property type="interactions" value="1"/>
</dbReference>
<dbReference type="STRING" id="10090.ENSMUSP00000061754"/>
<dbReference type="ChEMBL" id="CHEMBL4523212"/>
<dbReference type="GlyCosmos" id="P30558">
    <property type="glycosylation" value="3 sites, No reported glycans"/>
</dbReference>
<dbReference type="GlyGen" id="P30558">
    <property type="glycosylation" value="3 sites"/>
</dbReference>
<dbReference type="iPTMnet" id="P30558"/>
<dbReference type="PhosphoSitePlus" id="P30558"/>
<dbReference type="PaxDb" id="10090-ENSMUSP00000061754"/>
<dbReference type="PeptideAtlas" id="P30558"/>
<dbReference type="ProteomicsDB" id="294011"/>
<dbReference type="Antibodypedia" id="4409">
    <property type="antibodies" value="667 antibodies from 43 providers"/>
</dbReference>
<dbReference type="DNASU" id="14062"/>
<dbReference type="Ensembl" id="ENSMUST00000059193.7">
    <property type="protein sequence ID" value="ENSMUSP00000061754.6"/>
    <property type="gene ID" value="ENSMUSG00000048376.7"/>
</dbReference>
<dbReference type="GeneID" id="14062"/>
<dbReference type="KEGG" id="mmu:14062"/>
<dbReference type="UCSC" id="uc007rmn.1">
    <property type="organism name" value="mouse"/>
</dbReference>
<dbReference type="AGR" id="MGI:101802"/>
<dbReference type="CTD" id="2149"/>
<dbReference type="MGI" id="MGI:101802">
    <property type="gene designation" value="F2r"/>
</dbReference>
<dbReference type="VEuPathDB" id="HostDB:ENSMUSG00000048376"/>
<dbReference type="eggNOG" id="ENOG502QTR0">
    <property type="taxonomic scope" value="Eukaryota"/>
</dbReference>
<dbReference type="GeneTree" id="ENSGT01050000244840"/>
<dbReference type="HOGENOM" id="CLU_009579_8_2_1"/>
<dbReference type="InParanoid" id="P30558"/>
<dbReference type="OMA" id="QCQKQVA"/>
<dbReference type="OrthoDB" id="8881832at2759"/>
<dbReference type="PhylomeDB" id="P30558"/>
<dbReference type="TreeFam" id="TF330775"/>
<dbReference type="Reactome" id="R-MMU-140875">
    <property type="pathway name" value="Common Pathway of Fibrin Clot Formation"/>
</dbReference>
<dbReference type="Reactome" id="R-MMU-375276">
    <property type="pathway name" value="Peptide ligand-binding receptors"/>
</dbReference>
<dbReference type="Reactome" id="R-MMU-416476">
    <property type="pathway name" value="G alpha (q) signalling events"/>
</dbReference>
<dbReference type="Reactome" id="R-MMU-456926">
    <property type="pathway name" value="Thrombin signalling through proteinase activated receptors (PARs)"/>
</dbReference>
<dbReference type="BioGRID-ORCS" id="14062">
    <property type="hits" value="1 hit in 80 CRISPR screens"/>
</dbReference>
<dbReference type="ChiTaRS" id="F2r">
    <property type="organism name" value="mouse"/>
</dbReference>
<dbReference type="PRO" id="PR:P30558"/>
<dbReference type="Proteomes" id="UP000000589">
    <property type="component" value="Chromosome 13"/>
</dbReference>
<dbReference type="RNAct" id="P30558">
    <property type="molecule type" value="protein"/>
</dbReference>
<dbReference type="Bgee" id="ENSMUSG00000048376">
    <property type="expression patterns" value="Expressed in molar tooth and 271 other cell types or tissues"/>
</dbReference>
<dbReference type="GO" id="GO:0005901">
    <property type="term" value="C:caveola"/>
    <property type="evidence" value="ECO:0000250"/>
    <property type="project" value="UniProtKB"/>
</dbReference>
<dbReference type="GO" id="GO:0009986">
    <property type="term" value="C:cell surface"/>
    <property type="evidence" value="ECO:0007669"/>
    <property type="project" value="Ensembl"/>
</dbReference>
<dbReference type="GO" id="GO:0005769">
    <property type="term" value="C:early endosome"/>
    <property type="evidence" value="ECO:0007669"/>
    <property type="project" value="Ensembl"/>
</dbReference>
<dbReference type="GO" id="GO:0005770">
    <property type="term" value="C:late endosome"/>
    <property type="evidence" value="ECO:0007669"/>
    <property type="project" value="Ensembl"/>
</dbReference>
<dbReference type="GO" id="GO:0031594">
    <property type="term" value="C:neuromuscular junction"/>
    <property type="evidence" value="ECO:0000250"/>
    <property type="project" value="UniProtKB"/>
</dbReference>
<dbReference type="GO" id="GO:0005886">
    <property type="term" value="C:plasma membrane"/>
    <property type="evidence" value="ECO:0000250"/>
    <property type="project" value="UniProtKB"/>
</dbReference>
<dbReference type="GO" id="GO:0031094">
    <property type="term" value="C:platelet dense tubular network"/>
    <property type="evidence" value="ECO:0000250"/>
    <property type="project" value="UniProtKB"/>
</dbReference>
<dbReference type="GO" id="GO:0045211">
    <property type="term" value="C:postsynaptic membrane"/>
    <property type="evidence" value="ECO:0000250"/>
    <property type="project" value="UniProtKB"/>
</dbReference>
<dbReference type="GO" id="GO:0004930">
    <property type="term" value="F:G protein-coupled receptor activity"/>
    <property type="evidence" value="ECO:0000315"/>
    <property type="project" value="UniProtKB"/>
</dbReference>
<dbReference type="GO" id="GO:0001965">
    <property type="term" value="F:G-protein alpha-subunit binding"/>
    <property type="evidence" value="ECO:0000314"/>
    <property type="project" value="UniProtKB"/>
</dbReference>
<dbReference type="GO" id="GO:0031681">
    <property type="term" value="F:G-protein beta-subunit binding"/>
    <property type="evidence" value="ECO:0000314"/>
    <property type="project" value="UniProtKB"/>
</dbReference>
<dbReference type="GO" id="GO:0032795">
    <property type="term" value="F:heterotrimeric G-protein binding"/>
    <property type="evidence" value="ECO:0000304"/>
    <property type="project" value="UniProtKB"/>
</dbReference>
<dbReference type="GO" id="GO:0005102">
    <property type="term" value="F:signaling receptor binding"/>
    <property type="evidence" value="ECO:0007669"/>
    <property type="project" value="Ensembl"/>
</dbReference>
<dbReference type="GO" id="GO:0015057">
    <property type="term" value="F:thrombin-activated receptor activity"/>
    <property type="evidence" value="ECO:0000250"/>
    <property type="project" value="UniProtKB"/>
</dbReference>
<dbReference type="GO" id="GO:0045217">
    <property type="term" value="P:cell-cell junction maintenance"/>
    <property type="evidence" value="ECO:0007669"/>
    <property type="project" value="Ensembl"/>
</dbReference>
<dbReference type="GO" id="GO:0002248">
    <property type="term" value="P:connective tissue replacement involved in inflammatory response wound healing"/>
    <property type="evidence" value="ECO:0000250"/>
    <property type="project" value="UniProtKB"/>
</dbReference>
<dbReference type="GO" id="GO:0036145">
    <property type="term" value="P:dendritic cell homeostasis"/>
    <property type="evidence" value="ECO:0000315"/>
    <property type="project" value="MGI"/>
</dbReference>
<dbReference type="GO" id="GO:0007529">
    <property type="term" value="P:establishment of synaptic specificity at neuromuscular junction"/>
    <property type="evidence" value="ECO:0000250"/>
    <property type="project" value="UniProtKB"/>
</dbReference>
<dbReference type="GO" id="GO:0048873">
    <property type="term" value="P:homeostasis of number of cells within a tissue"/>
    <property type="evidence" value="ECO:0000315"/>
    <property type="project" value="MGI"/>
</dbReference>
<dbReference type="GO" id="GO:0006954">
    <property type="term" value="P:inflammatory response"/>
    <property type="evidence" value="ECO:0000315"/>
    <property type="project" value="MGI"/>
</dbReference>
<dbReference type="GO" id="GO:0008285">
    <property type="term" value="P:negative regulation of cell population proliferation"/>
    <property type="evidence" value="ECO:0000250"/>
    <property type="project" value="UniProtKB"/>
</dbReference>
<dbReference type="GO" id="GO:0003105">
    <property type="term" value="P:negative regulation of glomerular filtration"/>
    <property type="evidence" value="ECO:0000250"/>
    <property type="project" value="UniProtKB"/>
</dbReference>
<dbReference type="GO" id="GO:0043524">
    <property type="term" value="P:negative regulation of neuron apoptotic process"/>
    <property type="evidence" value="ECO:0000250"/>
    <property type="project" value="UniProtKB"/>
</dbReference>
<dbReference type="GO" id="GO:1900134">
    <property type="term" value="P:negative regulation of renin secretion into blood stream"/>
    <property type="evidence" value="ECO:0000314"/>
    <property type="project" value="UniProtKB"/>
</dbReference>
<dbReference type="GO" id="GO:0007200">
    <property type="term" value="P:phospholipase C-activating G protein-coupled receptor signaling pathway"/>
    <property type="evidence" value="ECO:0000250"/>
    <property type="project" value="UniProtKB"/>
</dbReference>
<dbReference type="GO" id="GO:0030168">
    <property type="term" value="P:platelet activation"/>
    <property type="evidence" value="ECO:0000250"/>
    <property type="project" value="UniProtKB"/>
</dbReference>
<dbReference type="GO" id="GO:0043065">
    <property type="term" value="P:positive regulation of apoptotic process"/>
    <property type="evidence" value="ECO:0000250"/>
    <property type="project" value="UniProtKB"/>
</dbReference>
<dbReference type="GO" id="GO:0030194">
    <property type="term" value="P:positive regulation of blood coagulation"/>
    <property type="evidence" value="ECO:0000315"/>
    <property type="project" value="MGI"/>
</dbReference>
<dbReference type="GO" id="GO:0051928">
    <property type="term" value="P:positive regulation of calcium ion transport"/>
    <property type="evidence" value="ECO:0000250"/>
    <property type="project" value="UniProtKB"/>
</dbReference>
<dbReference type="GO" id="GO:0043123">
    <property type="term" value="P:positive regulation of canonical NF-kappaB signal transduction"/>
    <property type="evidence" value="ECO:0000250"/>
    <property type="project" value="UniProtKB"/>
</dbReference>
<dbReference type="GO" id="GO:0030335">
    <property type="term" value="P:positive regulation of cell migration"/>
    <property type="evidence" value="ECO:0000314"/>
    <property type="project" value="UniProtKB"/>
</dbReference>
<dbReference type="GO" id="GO:0008284">
    <property type="term" value="P:positive regulation of cell population proliferation"/>
    <property type="evidence" value="ECO:0000250"/>
    <property type="project" value="UniProtKB"/>
</dbReference>
<dbReference type="GO" id="GO:0032967">
    <property type="term" value="P:positive regulation of collagen biosynthetic process"/>
    <property type="evidence" value="ECO:0000250"/>
    <property type="project" value="UniProtKB"/>
</dbReference>
<dbReference type="GO" id="GO:0007204">
    <property type="term" value="P:positive regulation of cytosolic calcium ion concentration"/>
    <property type="evidence" value="ECO:0000314"/>
    <property type="project" value="UniProtKB"/>
</dbReference>
<dbReference type="GO" id="GO:0045893">
    <property type="term" value="P:positive regulation of DNA-templated transcription"/>
    <property type="evidence" value="ECO:0000250"/>
    <property type="project" value="UniProtKB"/>
</dbReference>
<dbReference type="GO" id="GO:0070374">
    <property type="term" value="P:positive regulation of ERK1 and ERK2 cascade"/>
    <property type="evidence" value="ECO:0000314"/>
    <property type="project" value="UniProtKB"/>
</dbReference>
<dbReference type="GO" id="GO:0032755">
    <property type="term" value="P:positive regulation of interleukin-6 production"/>
    <property type="evidence" value="ECO:0000250"/>
    <property type="project" value="UniProtKB"/>
</dbReference>
<dbReference type="GO" id="GO:0032757">
    <property type="term" value="P:positive regulation of interleukin-8 production"/>
    <property type="evidence" value="ECO:0000250"/>
    <property type="project" value="UniProtKB"/>
</dbReference>
<dbReference type="GO" id="GO:0043410">
    <property type="term" value="P:positive regulation of MAPK cascade"/>
    <property type="evidence" value="ECO:0000250"/>
    <property type="project" value="UniProtKB"/>
</dbReference>
<dbReference type="GO" id="GO:0051897">
    <property type="term" value="P:positive regulation of phosphatidylinositol 3-kinase/protein kinase B signal transduction"/>
    <property type="evidence" value="ECO:0000314"/>
    <property type="project" value="UniProtKB"/>
</dbReference>
<dbReference type="GO" id="GO:0046427">
    <property type="term" value="P:positive regulation of receptor signaling pathway via JAK-STAT"/>
    <property type="evidence" value="ECO:0000250"/>
    <property type="project" value="UniProtKB"/>
</dbReference>
<dbReference type="GO" id="GO:0051281">
    <property type="term" value="P:positive regulation of release of sequestered calcium ion into cytosol"/>
    <property type="evidence" value="ECO:0000250"/>
    <property type="project" value="UniProtKB"/>
</dbReference>
<dbReference type="GO" id="GO:0035025">
    <property type="term" value="P:positive regulation of Rho protein signal transduction"/>
    <property type="evidence" value="ECO:0000314"/>
    <property type="project" value="UniProtKB"/>
</dbReference>
<dbReference type="GO" id="GO:0045987">
    <property type="term" value="P:positive regulation of smooth muscle contraction"/>
    <property type="evidence" value="ECO:0000250"/>
    <property type="project" value="UniProtKB"/>
</dbReference>
<dbReference type="GO" id="GO:0045907">
    <property type="term" value="P:positive regulation of vasoconstriction"/>
    <property type="evidence" value="ECO:0000314"/>
    <property type="project" value="UniProtKB"/>
</dbReference>
<dbReference type="GO" id="GO:0032651">
    <property type="term" value="P:regulation of interleukin-1 beta production"/>
    <property type="evidence" value="ECO:0000315"/>
    <property type="project" value="MGI"/>
</dbReference>
<dbReference type="GO" id="GO:0048167">
    <property type="term" value="P:regulation of synaptic plasticity"/>
    <property type="evidence" value="ECO:0000314"/>
    <property type="project" value="UniProtKB"/>
</dbReference>
<dbReference type="GO" id="GO:0051209">
    <property type="term" value="P:release of sequestered calcium ion into cytosol"/>
    <property type="evidence" value="ECO:0000250"/>
    <property type="project" value="UniProtKB"/>
</dbReference>
<dbReference type="GO" id="GO:0032496">
    <property type="term" value="P:response to lipopolysaccharide"/>
    <property type="evidence" value="ECO:0000315"/>
    <property type="project" value="MGI"/>
</dbReference>
<dbReference type="GO" id="GO:0009611">
    <property type="term" value="P:response to wounding"/>
    <property type="evidence" value="ECO:0000250"/>
    <property type="project" value="UniProtKB"/>
</dbReference>
<dbReference type="GO" id="GO:0070493">
    <property type="term" value="P:thrombin-activated receptor signaling pathway"/>
    <property type="evidence" value="ECO:0000316"/>
    <property type="project" value="MGI"/>
</dbReference>
<dbReference type="GO" id="GO:0099553">
    <property type="term" value="P:trans-synaptic signaling by endocannabinoid, modulating synaptic transmission"/>
    <property type="evidence" value="ECO:0000315"/>
    <property type="project" value="ParkinsonsUK-UCL"/>
</dbReference>
<dbReference type="CDD" id="cd15369">
    <property type="entry name" value="7tmA_PAR1"/>
    <property type="match status" value="1"/>
</dbReference>
<dbReference type="FunFam" id="1.20.1070.10:FF:000040">
    <property type="entry name" value="Coagulation factor 2 (thrombin) receptor"/>
    <property type="match status" value="1"/>
</dbReference>
<dbReference type="Gene3D" id="1.20.1070.10">
    <property type="entry name" value="Rhodopsin 7-helix transmembrane proteins"/>
    <property type="match status" value="1"/>
</dbReference>
<dbReference type="InterPro" id="IPR000276">
    <property type="entry name" value="GPCR_Rhodpsn"/>
</dbReference>
<dbReference type="InterPro" id="IPR017452">
    <property type="entry name" value="GPCR_Rhodpsn_7TM"/>
</dbReference>
<dbReference type="InterPro" id="IPR003912">
    <property type="entry name" value="Protea_act_rcpt"/>
</dbReference>
<dbReference type="InterPro" id="IPR000935">
    <property type="entry name" value="Thrmbn_rcpt"/>
</dbReference>
<dbReference type="PANTHER" id="PTHR24232">
    <property type="entry name" value="G-PROTEIN COUPLED RECEPTOR"/>
    <property type="match status" value="1"/>
</dbReference>
<dbReference type="PANTHER" id="PTHR24232:SF20">
    <property type="entry name" value="PROTEINASE-ACTIVATED RECEPTOR 1"/>
    <property type="match status" value="1"/>
</dbReference>
<dbReference type="Pfam" id="PF00001">
    <property type="entry name" value="7tm_1"/>
    <property type="match status" value="1"/>
</dbReference>
<dbReference type="PRINTS" id="PR00237">
    <property type="entry name" value="GPCRRHODOPSN"/>
</dbReference>
<dbReference type="PRINTS" id="PR01428">
    <property type="entry name" value="PROTEASEAR"/>
</dbReference>
<dbReference type="PRINTS" id="PR00908">
    <property type="entry name" value="THROMBINR"/>
</dbReference>
<dbReference type="SUPFAM" id="SSF81321">
    <property type="entry name" value="Family A G protein-coupled receptor-like"/>
    <property type="match status" value="1"/>
</dbReference>
<dbReference type="PROSITE" id="PS00237">
    <property type="entry name" value="G_PROTEIN_RECEP_F1_1"/>
    <property type="match status" value="1"/>
</dbReference>
<dbReference type="PROSITE" id="PS50262">
    <property type="entry name" value="G_PROTEIN_RECEP_F1_2"/>
    <property type="match status" value="1"/>
</dbReference>
<reference key="1">
    <citation type="submission" date="1992-10" db="EMBL/GenBank/DDBJ databases">
        <title>Cloning of cDNA for the mouse thrombin receptor.</title>
        <authorList>
            <person name="Coughlin S.R."/>
        </authorList>
    </citation>
    <scope>NUCLEOTIDE SEQUENCE [MRNA]</scope>
    <source>
        <tissue>Brain</tissue>
    </source>
</reference>
<reference key="2">
    <citation type="journal article" date="1996" name="Mol. Med.">
        <title>Conserved structure and adjacent location of the thrombin receptor and protease-activated receptor 2 genes define a protease-activated receptor gene cluster.</title>
        <authorList>
            <person name="Kahn M.L."/>
            <person name="Ishii K."/>
            <person name="Kuo W.L."/>
            <person name="Piper M."/>
            <person name="Connolly A.J."/>
            <person name="Shi Y.P."/>
            <person name="Wu R."/>
            <person name="Lin C.C."/>
            <person name="Coughlin S.R."/>
        </authorList>
    </citation>
    <scope>NUCLEOTIDE SEQUENCE [GENOMIC DNA]</scope>
    <source>
        <strain>129</strain>
    </source>
</reference>
<reference key="3">
    <citation type="journal article" date="2005" name="Science">
        <title>The transcriptional landscape of the mammalian genome.</title>
        <authorList>
            <person name="Carninci P."/>
            <person name="Kasukawa T."/>
            <person name="Katayama S."/>
            <person name="Gough J."/>
            <person name="Frith M.C."/>
            <person name="Maeda N."/>
            <person name="Oyama R."/>
            <person name="Ravasi T."/>
            <person name="Lenhard B."/>
            <person name="Wells C."/>
            <person name="Kodzius R."/>
            <person name="Shimokawa K."/>
            <person name="Bajic V.B."/>
            <person name="Brenner S.E."/>
            <person name="Batalov S."/>
            <person name="Forrest A.R."/>
            <person name="Zavolan M."/>
            <person name="Davis M.J."/>
            <person name="Wilming L.G."/>
            <person name="Aidinis V."/>
            <person name="Allen J.E."/>
            <person name="Ambesi-Impiombato A."/>
            <person name="Apweiler R."/>
            <person name="Aturaliya R.N."/>
            <person name="Bailey T.L."/>
            <person name="Bansal M."/>
            <person name="Baxter L."/>
            <person name="Beisel K.W."/>
            <person name="Bersano T."/>
            <person name="Bono H."/>
            <person name="Chalk A.M."/>
            <person name="Chiu K.P."/>
            <person name="Choudhary V."/>
            <person name="Christoffels A."/>
            <person name="Clutterbuck D.R."/>
            <person name="Crowe M.L."/>
            <person name="Dalla E."/>
            <person name="Dalrymple B.P."/>
            <person name="de Bono B."/>
            <person name="Della Gatta G."/>
            <person name="di Bernardo D."/>
            <person name="Down T."/>
            <person name="Engstrom P."/>
            <person name="Fagiolini M."/>
            <person name="Faulkner G."/>
            <person name="Fletcher C.F."/>
            <person name="Fukushima T."/>
            <person name="Furuno M."/>
            <person name="Futaki S."/>
            <person name="Gariboldi M."/>
            <person name="Georgii-Hemming P."/>
            <person name="Gingeras T.R."/>
            <person name="Gojobori T."/>
            <person name="Green R.E."/>
            <person name="Gustincich S."/>
            <person name="Harbers M."/>
            <person name="Hayashi Y."/>
            <person name="Hensch T.K."/>
            <person name="Hirokawa N."/>
            <person name="Hill D."/>
            <person name="Huminiecki L."/>
            <person name="Iacono M."/>
            <person name="Ikeo K."/>
            <person name="Iwama A."/>
            <person name="Ishikawa T."/>
            <person name="Jakt M."/>
            <person name="Kanapin A."/>
            <person name="Katoh M."/>
            <person name="Kawasawa Y."/>
            <person name="Kelso J."/>
            <person name="Kitamura H."/>
            <person name="Kitano H."/>
            <person name="Kollias G."/>
            <person name="Krishnan S.P."/>
            <person name="Kruger A."/>
            <person name="Kummerfeld S.K."/>
            <person name="Kurochkin I.V."/>
            <person name="Lareau L.F."/>
            <person name="Lazarevic D."/>
            <person name="Lipovich L."/>
            <person name="Liu J."/>
            <person name="Liuni S."/>
            <person name="McWilliam S."/>
            <person name="Madan Babu M."/>
            <person name="Madera M."/>
            <person name="Marchionni L."/>
            <person name="Matsuda H."/>
            <person name="Matsuzawa S."/>
            <person name="Miki H."/>
            <person name="Mignone F."/>
            <person name="Miyake S."/>
            <person name="Morris K."/>
            <person name="Mottagui-Tabar S."/>
            <person name="Mulder N."/>
            <person name="Nakano N."/>
            <person name="Nakauchi H."/>
            <person name="Ng P."/>
            <person name="Nilsson R."/>
            <person name="Nishiguchi S."/>
            <person name="Nishikawa S."/>
            <person name="Nori F."/>
            <person name="Ohara O."/>
            <person name="Okazaki Y."/>
            <person name="Orlando V."/>
            <person name="Pang K.C."/>
            <person name="Pavan W.J."/>
            <person name="Pavesi G."/>
            <person name="Pesole G."/>
            <person name="Petrovsky N."/>
            <person name="Piazza S."/>
            <person name="Reed J."/>
            <person name="Reid J.F."/>
            <person name="Ring B.Z."/>
            <person name="Ringwald M."/>
            <person name="Rost B."/>
            <person name="Ruan Y."/>
            <person name="Salzberg S.L."/>
            <person name="Sandelin A."/>
            <person name="Schneider C."/>
            <person name="Schoenbach C."/>
            <person name="Sekiguchi K."/>
            <person name="Semple C.A."/>
            <person name="Seno S."/>
            <person name="Sessa L."/>
            <person name="Sheng Y."/>
            <person name="Shibata Y."/>
            <person name="Shimada H."/>
            <person name="Shimada K."/>
            <person name="Silva D."/>
            <person name="Sinclair B."/>
            <person name="Sperling S."/>
            <person name="Stupka E."/>
            <person name="Sugiura K."/>
            <person name="Sultana R."/>
            <person name="Takenaka Y."/>
            <person name="Taki K."/>
            <person name="Tammoja K."/>
            <person name="Tan S.L."/>
            <person name="Tang S."/>
            <person name="Taylor M.S."/>
            <person name="Tegner J."/>
            <person name="Teichmann S.A."/>
            <person name="Ueda H.R."/>
            <person name="van Nimwegen E."/>
            <person name="Verardo R."/>
            <person name="Wei C.L."/>
            <person name="Yagi K."/>
            <person name="Yamanishi H."/>
            <person name="Zabarovsky E."/>
            <person name="Zhu S."/>
            <person name="Zimmer A."/>
            <person name="Hide W."/>
            <person name="Bult C."/>
            <person name="Grimmond S.M."/>
            <person name="Teasdale R.D."/>
            <person name="Liu E.T."/>
            <person name="Brusic V."/>
            <person name="Quackenbush J."/>
            <person name="Wahlestedt C."/>
            <person name="Mattick J.S."/>
            <person name="Hume D.A."/>
            <person name="Kai C."/>
            <person name="Sasaki D."/>
            <person name="Tomaru Y."/>
            <person name="Fukuda S."/>
            <person name="Kanamori-Katayama M."/>
            <person name="Suzuki M."/>
            <person name="Aoki J."/>
            <person name="Arakawa T."/>
            <person name="Iida J."/>
            <person name="Imamura K."/>
            <person name="Itoh M."/>
            <person name="Kato T."/>
            <person name="Kawaji H."/>
            <person name="Kawagashira N."/>
            <person name="Kawashima T."/>
            <person name="Kojima M."/>
            <person name="Kondo S."/>
            <person name="Konno H."/>
            <person name="Nakano K."/>
            <person name="Ninomiya N."/>
            <person name="Nishio T."/>
            <person name="Okada M."/>
            <person name="Plessy C."/>
            <person name="Shibata K."/>
            <person name="Shiraki T."/>
            <person name="Suzuki S."/>
            <person name="Tagami M."/>
            <person name="Waki K."/>
            <person name="Watahiki A."/>
            <person name="Okamura-Oho Y."/>
            <person name="Suzuki H."/>
            <person name="Kawai J."/>
            <person name="Hayashizaki Y."/>
        </authorList>
    </citation>
    <scope>NUCLEOTIDE SEQUENCE [LARGE SCALE MRNA]</scope>
    <source>
        <strain>C57BL/6J</strain>
        <tissue>Heart</tissue>
    </source>
</reference>
<reference key="4">
    <citation type="journal article" date="2004" name="Genome Res.">
        <title>The status, quality, and expansion of the NIH full-length cDNA project: the Mammalian Gene Collection (MGC).</title>
        <authorList>
            <consortium name="The MGC Project Team"/>
        </authorList>
    </citation>
    <scope>NUCLEOTIDE SEQUENCE [LARGE SCALE MRNA]</scope>
    <source>
        <strain>FVB/N</strain>
        <tissue>Mammary gland</tissue>
    </source>
</reference>
<reference key="5">
    <citation type="journal article" date="1996" name="Mamm. Genome">
        <title>Structure and localization of the thrombin receptor gene on mouse chromosome 13.</title>
        <authorList>
            <person name="Xue J."/>
            <person name="Jenkins N.A."/>
            <person name="Gilbert D.J."/>
            <person name="Copeland N.G."/>
            <person name="Sadler J.E."/>
        </authorList>
    </citation>
    <scope>NUCLEOTIDE SEQUENCE [GENOMIC DNA] OF 1-74</scope>
    <source>
        <strain>129/Sv</strain>
    </source>
</reference>
<reference key="6">
    <citation type="journal article" date="2009" name="Nat. Biotechnol.">
        <title>Mass-spectrometric identification and relative quantification of N-linked cell surface glycoproteins.</title>
        <authorList>
            <person name="Wollscheid B."/>
            <person name="Bausch-Fluck D."/>
            <person name="Henderson C."/>
            <person name="O'Brien R."/>
            <person name="Bibel M."/>
            <person name="Schiess R."/>
            <person name="Aebersold R."/>
            <person name="Watts J.D."/>
        </authorList>
    </citation>
    <scope>GLYCOSYLATION [LARGE SCALE ANALYSIS] AT ASN-67</scope>
</reference>
<reference key="7">
    <citation type="journal article" date="2015" name="Mol. Brain">
        <title>Channel-mediated astrocytic glutamate modulates hippocampal synaptic plasticity by activating postsynaptic NMDA receptors.</title>
        <authorList>
            <person name="Park H."/>
            <person name="Han K.S."/>
            <person name="Seo J."/>
            <person name="Lee J."/>
            <person name="Dravid S.M."/>
            <person name="Woo J."/>
            <person name="Chun H."/>
            <person name="Cho S."/>
            <person name="Bae J.Y."/>
            <person name="An H."/>
            <person name="Koh W."/>
            <person name="Yoon B.E."/>
            <person name="Berlinguer-Palmini R."/>
            <person name="Mannaioni G."/>
            <person name="Traynelis S.F."/>
            <person name="Bae Y.C."/>
            <person name="Choi S.Y."/>
            <person name="Lee C.J."/>
        </authorList>
    </citation>
    <scope>FUNCTION</scope>
</reference>